<reference key="1">
    <citation type="journal article" date="2005" name="Science">
        <title>The transcriptional landscape of the mammalian genome.</title>
        <authorList>
            <person name="Carninci P."/>
            <person name="Kasukawa T."/>
            <person name="Katayama S."/>
            <person name="Gough J."/>
            <person name="Frith M.C."/>
            <person name="Maeda N."/>
            <person name="Oyama R."/>
            <person name="Ravasi T."/>
            <person name="Lenhard B."/>
            <person name="Wells C."/>
            <person name="Kodzius R."/>
            <person name="Shimokawa K."/>
            <person name="Bajic V.B."/>
            <person name="Brenner S.E."/>
            <person name="Batalov S."/>
            <person name="Forrest A.R."/>
            <person name="Zavolan M."/>
            <person name="Davis M.J."/>
            <person name="Wilming L.G."/>
            <person name="Aidinis V."/>
            <person name="Allen J.E."/>
            <person name="Ambesi-Impiombato A."/>
            <person name="Apweiler R."/>
            <person name="Aturaliya R.N."/>
            <person name="Bailey T.L."/>
            <person name="Bansal M."/>
            <person name="Baxter L."/>
            <person name="Beisel K.W."/>
            <person name="Bersano T."/>
            <person name="Bono H."/>
            <person name="Chalk A.M."/>
            <person name="Chiu K.P."/>
            <person name="Choudhary V."/>
            <person name="Christoffels A."/>
            <person name="Clutterbuck D.R."/>
            <person name="Crowe M.L."/>
            <person name="Dalla E."/>
            <person name="Dalrymple B.P."/>
            <person name="de Bono B."/>
            <person name="Della Gatta G."/>
            <person name="di Bernardo D."/>
            <person name="Down T."/>
            <person name="Engstrom P."/>
            <person name="Fagiolini M."/>
            <person name="Faulkner G."/>
            <person name="Fletcher C.F."/>
            <person name="Fukushima T."/>
            <person name="Furuno M."/>
            <person name="Futaki S."/>
            <person name="Gariboldi M."/>
            <person name="Georgii-Hemming P."/>
            <person name="Gingeras T.R."/>
            <person name="Gojobori T."/>
            <person name="Green R.E."/>
            <person name="Gustincich S."/>
            <person name="Harbers M."/>
            <person name="Hayashi Y."/>
            <person name="Hensch T.K."/>
            <person name="Hirokawa N."/>
            <person name="Hill D."/>
            <person name="Huminiecki L."/>
            <person name="Iacono M."/>
            <person name="Ikeo K."/>
            <person name="Iwama A."/>
            <person name="Ishikawa T."/>
            <person name="Jakt M."/>
            <person name="Kanapin A."/>
            <person name="Katoh M."/>
            <person name="Kawasawa Y."/>
            <person name="Kelso J."/>
            <person name="Kitamura H."/>
            <person name="Kitano H."/>
            <person name="Kollias G."/>
            <person name="Krishnan S.P."/>
            <person name="Kruger A."/>
            <person name="Kummerfeld S.K."/>
            <person name="Kurochkin I.V."/>
            <person name="Lareau L.F."/>
            <person name="Lazarevic D."/>
            <person name="Lipovich L."/>
            <person name="Liu J."/>
            <person name="Liuni S."/>
            <person name="McWilliam S."/>
            <person name="Madan Babu M."/>
            <person name="Madera M."/>
            <person name="Marchionni L."/>
            <person name="Matsuda H."/>
            <person name="Matsuzawa S."/>
            <person name="Miki H."/>
            <person name="Mignone F."/>
            <person name="Miyake S."/>
            <person name="Morris K."/>
            <person name="Mottagui-Tabar S."/>
            <person name="Mulder N."/>
            <person name="Nakano N."/>
            <person name="Nakauchi H."/>
            <person name="Ng P."/>
            <person name="Nilsson R."/>
            <person name="Nishiguchi S."/>
            <person name="Nishikawa S."/>
            <person name="Nori F."/>
            <person name="Ohara O."/>
            <person name="Okazaki Y."/>
            <person name="Orlando V."/>
            <person name="Pang K.C."/>
            <person name="Pavan W.J."/>
            <person name="Pavesi G."/>
            <person name="Pesole G."/>
            <person name="Petrovsky N."/>
            <person name="Piazza S."/>
            <person name="Reed J."/>
            <person name="Reid J.F."/>
            <person name="Ring B.Z."/>
            <person name="Ringwald M."/>
            <person name="Rost B."/>
            <person name="Ruan Y."/>
            <person name="Salzberg S.L."/>
            <person name="Sandelin A."/>
            <person name="Schneider C."/>
            <person name="Schoenbach C."/>
            <person name="Sekiguchi K."/>
            <person name="Semple C.A."/>
            <person name="Seno S."/>
            <person name="Sessa L."/>
            <person name="Sheng Y."/>
            <person name="Shibata Y."/>
            <person name="Shimada H."/>
            <person name="Shimada K."/>
            <person name="Silva D."/>
            <person name="Sinclair B."/>
            <person name="Sperling S."/>
            <person name="Stupka E."/>
            <person name="Sugiura K."/>
            <person name="Sultana R."/>
            <person name="Takenaka Y."/>
            <person name="Taki K."/>
            <person name="Tammoja K."/>
            <person name="Tan S.L."/>
            <person name="Tang S."/>
            <person name="Taylor M.S."/>
            <person name="Tegner J."/>
            <person name="Teichmann S.A."/>
            <person name="Ueda H.R."/>
            <person name="van Nimwegen E."/>
            <person name="Verardo R."/>
            <person name="Wei C.L."/>
            <person name="Yagi K."/>
            <person name="Yamanishi H."/>
            <person name="Zabarovsky E."/>
            <person name="Zhu S."/>
            <person name="Zimmer A."/>
            <person name="Hide W."/>
            <person name="Bult C."/>
            <person name="Grimmond S.M."/>
            <person name="Teasdale R.D."/>
            <person name="Liu E.T."/>
            <person name="Brusic V."/>
            <person name="Quackenbush J."/>
            <person name="Wahlestedt C."/>
            <person name="Mattick J.S."/>
            <person name="Hume D.A."/>
            <person name="Kai C."/>
            <person name="Sasaki D."/>
            <person name="Tomaru Y."/>
            <person name="Fukuda S."/>
            <person name="Kanamori-Katayama M."/>
            <person name="Suzuki M."/>
            <person name="Aoki J."/>
            <person name="Arakawa T."/>
            <person name="Iida J."/>
            <person name="Imamura K."/>
            <person name="Itoh M."/>
            <person name="Kato T."/>
            <person name="Kawaji H."/>
            <person name="Kawagashira N."/>
            <person name="Kawashima T."/>
            <person name="Kojima M."/>
            <person name="Kondo S."/>
            <person name="Konno H."/>
            <person name="Nakano K."/>
            <person name="Ninomiya N."/>
            <person name="Nishio T."/>
            <person name="Okada M."/>
            <person name="Plessy C."/>
            <person name="Shibata K."/>
            <person name="Shiraki T."/>
            <person name="Suzuki S."/>
            <person name="Tagami M."/>
            <person name="Waki K."/>
            <person name="Watahiki A."/>
            <person name="Okamura-Oho Y."/>
            <person name="Suzuki H."/>
            <person name="Kawai J."/>
            <person name="Hayashizaki Y."/>
        </authorList>
    </citation>
    <scope>NUCLEOTIDE SEQUENCE [LARGE SCALE MRNA]</scope>
    <source>
        <strain>C57BL/6J</strain>
        <tissue>Testis</tissue>
    </source>
</reference>
<reference key="2">
    <citation type="journal article" date="2009" name="PLoS Biol.">
        <title>Lineage-specific biology revealed by a finished genome assembly of the mouse.</title>
        <authorList>
            <person name="Church D.M."/>
            <person name="Goodstadt L."/>
            <person name="Hillier L.W."/>
            <person name="Zody M.C."/>
            <person name="Goldstein S."/>
            <person name="She X."/>
            <person name="Bult C.J."/>
            <person name="Agarwala R."/>
            <person name="Cherry J.L."/>
            <person name="DiCuccio M."/>
            <person name="Hlavina W."/>
            <person name="Kapustin Y."/>
            <person name="Meric P."/>
            <person name="Maglott D."/>
            <person name="Birtle Z."/>
            <person name="Marques A.C."/>
            <person name="Graves T."/>
            <person name="Zhou S."/>
            <person name="Teague B."/>
            <person name="Potamousis K."/>
            <person name="Churas C."/>
            <person name="Place M."/>
            <person name="Herschleb J."/>
            <person name="Runnheim R."/>
            <person name="Forrest D."/>
            <person name="Amos-Landgraf J."/>
            <person name="Schwartz D.C."/>
            <person name="Cheng Z."/>
            <person name="Lindblad-Toh K."/>
            <person name="Eichler E.E."/>
            <person name="Ponting C.P."/>
        </authorList>
    </citation>
    <scope>NUCLEOTIDE SEQUENCE [LARGE SCALE GENOMIC DNA]</scope>
    <source>
        <strain>C57BL/6J</strain>
    </source>
</reference>
<reference key="3">
    <citation type="journal article" date="2004" name="Genome Res.">
        <title>The status, quality, and expansion of the NIH full-length cDNA project: the Mammalian Gene Collection (MGC).</title>
        <authorList>
            <consortium name="The MGC Project Team"/>
        </authorList>
    </citation>
    <scope>NUCLEOTIDE SEQUENCE [LARGE SCALE MRNA]</scope>
    <source>
        <tissue>Brain</tissue>
    </source>
</reference>
<name>FM1AB_MOUSE</name>
<evidence type="ECO:0000250" key="1">
    <source>
        <dbReference type="UniProtKB" id="Q9BSK4"/>
    </source>
</evidence>
<evidence type="ECO:0000250" key="2">
    <source>
        <dbReference type="UniProtKB" id="Q9Z2G1"/>
    </source>
</evidence>
<evidence type="ECO:0000256" key="3">
    <source>
        <dbReference type="SAM" id="MobiDB-lite"/>
    </source>
</evidence>
<evidence type="ECO:0000305" key="4"/>
<evidence type="ECO:0000312" key="5">
    <source>
        <dbReference type="MGI" id="MGI:2441689"/>
    </source>
</evidence>
<sequence>MDLHTAVYNAAHDGKLPLLQKLLASRGREELEELLGEVAGGGTPLLIAARRGHLDVVEYLVDHCGASVEASGSVHFDGETIEGAPPLWAASAAGHLAVVRSLLHRGASVNRTTCTNSTPLRAACFNGHLDVVRCLVGEHKADLEVANRHGHTCLMISCYKGHREIARYLLERGAQVNRRSAKGNTALHDCAESGSLEILQLLLSCHARMERDGYGMTPLLAASITGHTNIVEYLIQEQPSHEQLSGTELPGEGSSQMAGNHCSTPEDAEQYESCCPTSREAAVEALELLGATYVDKKRDLLGALKHWRRAMELRHQGGGFLPKPEPQQLVLAYDYSREVTTPQELEALITDPDEMRMQALLIRERILGPSHPDTSYYIRYRGAVYADSGNFERCIRLWKYALDMQQNNLEPLSPMTASSFLSFAELFSYVLQDHSAKGNLGMQLDFADLIGVLSKGVREVERALQLPKEPDDSAQFTKAIAIILHLLYLLEKVECTPRQEHLKHQTVYRLLKCAPRGKNGFTPLHMAVDKETTNVGQYHVGVFPSLQVVKVLLDCGADPDSRDFDNNSPLHIAAQNNCPAIMDALIEAGAHMDATNTFKKTAYELLDSKLLAKSTVQPFNYVTLQCLAARALDRNKVPYKGFIPEELEAFIQLH</sequence>
<proteinExistence type="evidence at transcript level"/>
<dbReference type="EMBL" id="AK029918">
    <property type="protein sequence ID" value="BAC26676.1"/>
    <property type="molecule type" value="mRNA"/>
</dbReference>
<dbReference type="EMBL" id="BX005100">
    <property type="protein sequence ID" value="CAI26025.1"/>
    <property type="status" value="ALT_INIT"/>
    <property type="molecule type" value="Genomic_DNA"/>
</dbReference>
<dbReference type="EMBL" id="BC139107">
    <property type="protein sequence ID" value="AAI39108.1"/>
    <property type="molecule type" value="mRNA"/>
</dbReference>
<dbReference type="EMBL" id="BC139123">
    <property type="protein sequence ID" value="AAI39124.1"/>
    <property type="molecule type" value="mRNA"/>
</dbReference>
<dbReference type="CCDS" id="CCDS78924.1"/>
<dbReference type="RefSeq" id="NP_789799.1">
    <property type="nucleotide sequence ID" value="NM_176829.2"/>
</dbReference>
<dbReference type="SMR" id="Q8C0T1"/>
<dbReference type="FunCoup" id="Q8C0T1">
    <property type="interactions" value="123"/>
</dbReference>
<dbReference type="STRING" id="10090.ENSMUSP00000100568"/>
<dbReference type="iPTMnet" id="Q8C0T1"/>
<dbReference type="PhosphoSitePlus" id="Q8C0T1"/>
<dbReference type="PaxDb" id="10090-ENSMUSP00000100568"/>
<dbReference type="ProteomicsDB" id="271784"/>
<dbReference type="Pumba" id="Q8C0T1"/>
<dbReference type="Ensembl" id="ENSMUST00000104962.2">
    <property type="protein sequence ID" value="ENSMUSP00000100568.3"/>
    <property type="gene ID" value="ENSMUSG00000078157.2"/>
</dbReference>
<dbReference type="GeneID" id="216622"/>
<dbReference type="KEGG" id="mmu:216622"/>
<dbReference type="UCSC" id="uc007ihr.1">
    <property type="organism name" value="mouse"/>
</dbReference>
<dbReference type="AGR" id="MGI:2441689"/>
<dbReference type="CTD" id="216622"/>
<dbReference type="MGI" id="MGI:2441689">
    <property type="gene designation" value="Fem1al"/>
</dbReference>
<dbReference type="VEuPathDB" id="HostDB:ENSMUSG00000078157"/>
<dbReference type="eggNOG" id="KOG0508">
    <property type="taxonomic scope" value="Eukaryota"/>
</dbReference>
<dbReference type="GeneTree" id="ENSGT00940000161210"/>
<dbReference type="HOGENOM" id="CLU_020042_2_0_1"/>
<dbReference type="InParanoid" id="Q8C0T1"/>
<dbReference type="OMA" id="ENKIGHE"/>
<dbReference type="OrthoDB" id="4429489at2759"/>
<dbReference type="PhylomeDB" id="Q8C0T1"/>
<dbReference type="TreeFam" id="TF351376"/>
<dbReference type="UniPathway" id="UPA00143"/>
<dbReference type="BioGRID-ORCS" id="216622">
    <property type="hits" value="0 hits in 71 CRISPR screens"/>
</dbReference>
<dbReference type="PRO" id="PR:Q8C0T1"/>
<dbReference type="Proteomes" id="UP000000589">
    <property type="component" value="Chromosome 11"/>
</dbReference>
<dbReference type="RNAct" id="Q8C0T1">
    <property type="molecule type" value="protein"/>
</dbReference>
<dbReference type="Bgee" id="ENSMUSG00000078157">
    <property type="expression patterns" value="Expressed in spermatid and 19 other cell types or tissues"/>
</dbReference>
<dbReference type="GO" id="GO:0031462">
    <property type="term" value="C:Cul2-RING ubiquitin ligase complex"/>
    <property type="evidence" value="ECO:0000250"/>
    <property type="project" value="UniProtKB"/>
</dbReference>
<dbReference type="GO" id="GO:0005739">
    <property type="term" value="C:mitochondrion"/>
    <property type="evidence" value="ECO:0000250"/>
    <property type="project" value="UniProtKB"/>
</dbReference>
<dbReference type="GO" id="GO:1990756">
    <property type="term" value="F:ubiquitin-like ligase-substrate adaptor activity"/>
    <property type="evidence" value="ECO:0000250"/>
    <property type="project" value="UniProtKB"/>
</dbReference>
<dbReference type="GO" id="GO:0016567">
    <property type="term" value="P:protein ubiquitination"/>
    <property type="evidence" value="ECO:0007669"/>
    <property type="project" value="UniProtKB-UniPathway"/>
</dbReference>
<dbReference type="GO" id="GO:0051438">
    <property type="term" value="P:regulation of ubiquitin-protein transferase activity"/>
    <property type="evidence" value="ECO:0000250"/>
    <property type="project" value="UniProtKB"/>
</dbReference>
<dbReference type="GO" id="GO:0140627">
    <property type="term" value="P:ubiquitin-dependent protein catabolic process via the C-end degron rule pathway"/>
    <property type="evidence" value="ECO:0000250"/>
    <property type="project" value="UniProtKB"/>
</dbReference>
<dbReference type="FunFam" id="1.25.40.20:FF:000076">
    <property type="entry name" value="Fem-1 homolog c (C.elegans)"/>
    <property type="match status" value="1"/>
</dbReference>
<dbReference type="FunFam" id="1.25.40.10:FF:000261">
    <property type="entry name" value="protein fem-1 homolog A"/>
    <property type="match status" value="1"/>
</dbReference>
<dbReference type="FunFam" id="1.25.40.20:FF:000133">
    <property type="entry name" value="protein fem-1 homolog A"/>
    <property type="match status" value="1"/>
</dbReference>
<dbReference type="FunFam" id="1.25.40.20:FF:000209">
    <property type="entry name" value="protein fem-1 homolog A"/>
    <property type="match status" value="1"/>
</dbReference>
<dbReference type="Gene3D" id="1.25.40.20">
    <property type="entry name" value="Ankyrin repeat-containing domain"/>
    <property type="match status" value="3"/>
</dbReference>
<dbReference type="Gene3D" id="1.25.40.10">
    <property type="entry name" value="Tetratricopeptide repeat domain"/>
    <property type="match status" value="1"/>
</dbReference>
<dbReference type="InterPro" id="IPR002110">
    <property type="entry name" value="Ankyrin_rpt"/>
</dbReference>
<dbReference type="InterPro" id="IPR036770">
    <property type="entry name" value="Ankyrin_rpt-contain_sf"/>
</dbReference>
<dbReference type="InterPro" id="IPR011990">
    <property type="entry name" value="TPR-like_helical_dom_sf"/>
</dbReference>
<dbReference type="PANTHER" id="PTHR24173">
    <property type="entry name" value="ANKYRIN REPEAT CONTAINING"/>
    <property type="match status" value="1"/>
</dbReference>
<dbReference type="PANTHER" id="PTHR24173:SF74">
    <property type="entry name" value="ANKYRIN REPEAT DOMAIN-CONTAINING PROTEIN 16"/>
    <property type="match status" value="1"/>
</dbReference>
<dbReference type="Pfam" id="PF00023">
    <property type="entry name" value="Ank"/>
    <property type="match status" value="1"/>
</dbReference>
<dbReference type="Pfam" id="PF12796">
    <property type="entry name" value="Ank_2"/>
    <property type="match status" value="3"/>
</dbReference>
<dbReference type="PRINTS" id="PR01415">
    <property type="entry name" value="ANKYRIN"/>
</dbReference>
<dbReference type="SMART" id="SM00248">
    <property type="entry name" value="ANK"/>
    <property type="match status" value="9"/>
</dbReference>
<dbReference type="SUPFAM" id="SSF48403">
    <property type="entry name" value="Ankyrin repeat"/>
    <property type="match status" value="2"/>
</dbReference>
<dbReference type="PROSITE" id="PS50297">
    <property type="entry name" value="ANK_REP_REGION"/>
    <property type="match status" value="2"/>
</dbReference>
<dbReference type="PROSITE" id="PS50088">
    <property type="entry name" value="ANK_REPEAT"/>
    <property type="match status" value="6"/>
</dbReference>
<accession>Q8C0T1</accession>
<accession>B2RT26</accession>
<accession>Q5RJ26</accession>
<keyword id="KW-0040">ANK repeat</keyword>
<keyword id="KW-0963">Cytoplasm</keyword>
<keyword id="KW-0496">Mitochondrion</keyword>
<keyword id="KW-0597">Phosphoprotein</keyword>
<keyword id="KW-1185">Reference proteome</keyword>
<keyword id="KW-0677">Repeat</keyword>
<keyword id="KW-0802">TPR repeat</keyword>
<keyword id="KW-0833">Ubl conjugation pathway</keyword>
<organism>
    <name type="scientific">Mus musculus</name>
    <name type="common">Mouse</name>
    <dbReference type="NCBI Taxonomy" id="10090"/>
    <lineage>
        <taxon>Eukaryota</taxon>
        <taxon>Metazoa</taxon>
        <taxon>Chordata</taxon>
        <taxon>Craniata</taxon>
        <taxon>Vertebrata</taxon>
        <taxon>Euteleostomi</taxon>
        <taxon>Mammalia</taxon>
        <taxon>Eutheria</taxon>
        <taxon>Euarchontoglires</taxon>
        <taxon>Glires</taxon>
        <taxon>Rodentia</taxon>
        <taxon>Myomorpha</taxon>
        <taxon>Muroidea</taxon>
        <taxon>Muridae</taxon>
        <taxon>Murinae</taxon>
        <taxon>Mus</taxon>
        <taxon>Mus</taxon>
    </lineage>
</organism>
<protein>
    <recommendedName>
        <fullName evidence="5">Protein fem-1 homolog A-like</fullName>
    </recommendedName>
    <alternativeName>
        <fullName evidence="4">FEM1-alpha-B</fullName>
    </alternativeName>
    <alternativeName>
        <fullName evidence="4">Protein fem-1 homolog A-B</fullName>
        <shortName evidence="4">FEM1a-B</shortName>
    </alternativeName>
</protein>
<comment type="function">
    <text evidence="1">Substrate-recognition component of a Cul2-RING (CRL2) E3 ubiquitin-protein ligase complex of the DesCEND (destruction via C-end degrons) pathway, which recognizes a C-degron located at the extreme C terminus of target proteins, leading to their ubiquitination and degradation. The C-degron recognized by the DesCEND pathway is usually a motif of less than ten residues and can be present in full-length proteins, truncated proteins or proteolytically cleaved forms. The CRL2(FEM1A) complex specifically recognizes proteins with an arginine at the C-terminus: recognizes and binds proteins ending with -Lys/Arg-Xaa-Arg and -Lys/Arg-Xaa-Xaa-Arg C-degrons, such as SIL1 or OR51B2, leading to their ubiquitination and degradation.</text>
</comment>
<comment type="pathway">
    <text evidence="1">Protein modification; protein ubiquitination.</text>
</comment>
<comment type="subunit">
    <text evidence="1">Component of a CRL2 E3 ubiquitin-protein ligase complex, also named ECS (Elongin BC-CUL2/5-SOCS-box protein) complex, composed of CUL2, Elongin BC (ELOB and ELOC), RBX1 and substrate-specific adapter FEM1A.</text>
</comment>
<comment type="subcellular location">
    <subcellularLocation>
        <location evidence="1">Mitochondrion</location>
    </subcellularLocation>
    <subcellularLocation>
        <location evidence="1">Cytoplasm</location>
    </subcellularLocation>
</comment>
<comment type="similarity">
    <text evidence="4">Belongs to the fem-1 family.</text>
</comment>
<comment type="sequence caution" evidence="4">
    <conflict type="erroneous initiation">
        <sequence resource="EMBL-CDS" id="CAI26025"/>
    </conflict>
</comment>
<gene>
    <name evidence="5" type="primary">Fem1al</name>
    <name evidence="4" type="synonym">Fem1ab</name>
</gene>
<feature type="chain" id="PRO_0000324527" description="Protein fem-1 homolog A-like">
    <location>
        <begin position="1"/>
        <end position="654"/>
    </location>
</feature>
<feature type="repeat" description="ANK 1">
    <location>
        <begin position="2"/>
        <end position="31"/>
    </location>
</feature>
<feature type="repeat" description="ANK 2">
    <location>
        <begin position="40"/>
        <end position="70"/>
    </location>
</feature>
<feature type="repeat" description="ANK 3">
    <location>
        <begin position="82"/>
        <end position="111"/>
    </location>
</feature>
<feature type="repeat" description="ANK 4">
    <location>
        <begin position="115"/>
        <end position="145"/>
    </location>
</feature>
<feature type="repeat" description="ANK 5">
    <location>
        <begin position="149"/>
        <end position="178"/>
    </location>
</feature>
<feature type="repeat" description="ANK 6">
    <location>
        <begin position="182"/>
        <end position="211"/>
    </location>
</feature>
<feature type="repeat" description="ANK 7">
    <location>
        <begin position="214"/>
        <end position="243"/>
    </location>
</feature>
<feature type="repeat" description="TPR 1">
    <location>
        <begin position="283"/>
        <end position="317"/>
    </location>
</feature>
<feature type="repeat" description="TPR 2">
    <location>
        <begin position="375"/>
        <end position="408"/>
    </location>
</feature>
<feature type="repeat" description="ANK 8">
    <location>
        <begin position="519"/>
        <end position="561"/>
    </location>
</feature>
<feature type="repeat" description="ANK 9">
    <location>
        <begin position="565"/>
        <end position="594"/>
    </location>
</feature>
<feature type="region of interest" description="Disordered" evidence="3">
    <location>
        <begin position="241"/>
        <end position="265"/>
    </location>
</feature>
<feature type="compositionally biased region" description="Polar residues" evidence="3">
    <location>
        <begin position="253"/>
        <end position="263"/>
    </location>
</feature>
<feature type="modified residue" description="Phosphoserine" evidence="2">
    <location>
        <position position="108"/>
    </location>
</feature>
<feature type="modified residue" description="Phosphoserine" evidence="2">
    <location>
        <position position="608"/>
    </location>
</feature>